<protein>
    <recommendedName>
        <fullName evidence="1">UPF0482 protein YnfB</fullName>
    </recommendedName>
</protein>
<accession>Q0T4M6</accession>
<sequence>MKITLSKRIGLLAFLLPCALALSTTVHAETNKLVIESGDSAQSRQHAAMEKEQWNDTRNLRQKVNKRTEKEWDKADAAFDNRDKCEQSANINAYWEPNTLRCLDRRTGRVITP</sequence>
<keyword id="KW-0732">Signal</keyword>
<feature type="signal peptide" evidence="1">
    <location>
        <begin position="1"/>
        <end position="28"/>
    </location>
</feature>
<feature type="chain" id="PRO_0000300232" description="UPF0482 protein YnfB">
    <location>
        <begin position="29"/>
        <end position="113"/>
    </location>
</feature>
<name>YNFB_SHIF8</name>
<gene>
    <name evidence="1" type="primary">ynfB</name>
    <name type="ordered locus">SFV_1561</name>
</gene>
<organism>
    <name type="scientific">Shigella flexneri serotype 5b (strain 8401)</name>
    <dbReference type="NCBI Taxonomy" id="373384"/>
    <lineage>
        <taxon>Bacteria</taxon>
        <taxon>Pseudomonadati</taxon>
        <taxon>Pseudomonadota</taxon>
        <taxon>Gammaproteobacteria</taxon>
        <taxon>Enterobacterales</taxon>
        <taxon>Enterobacteriaceae</taxon>
        <taxon>Shigella</taxon>
    </lineage>
</organism>
<dbReference type="EMBL" id="CP000266">
    <property type="protein sequence ID" value="ABF03739.1"/>
    <property type="molecule type" value="Genomic_DNA"/>
</dbReference>
<dbReference type="RefSeq" id="WP_000705197.1">
    <property type="nucleotide sequence ID" value="NC_008258.1"/>
</dbReference>
<dbReference type="KEGG" id="sfv:SFV_1561"/>
<dbReference type="HOGENOM" id="CLU_167574_0_0_6"/>
<dbReference type="Proteomes" id="UP000000659">
    <property type="component" value="Chromosome"/>
</dbReference>
<dbReference type="HAMAP" id="MF_01581">
    <property type="entry name" value="UPF0482"/>
    <property type="match status" value="1"/>
</dbReference>
<dbReference type="InterPro" id="IPR009700">
    <property type="entry name" value="DUF1283"/>
</dbReference>
<dbReference type="NCBIfam" id="NF010180">
    <property type="entry name" value="PRK13659.1"/>
    <property type="match status" value="1"/>
</dbReference>
<dbReference type="Pfam" id="PF06932">
    <property type="entry name" value="DUF1283"/>
    <property type="match status" value="1"/>
</dbReference>
<evidence type="ECO:0000255" key="1">
    <source>
        <dbReference type="HAMAP-Rule" id="MF_01581"/>
    </source>
</evidence>
<proteinExistence type="inferred from homology"/>
<comment type="similarity">
    <text evidence="1">Belongs to the UPF0482 family.</text>
</comment>
<reference key="1">
    <citation type="journal article" date="2006" name="BMC Genomics">
        <title>Complete genome sequence of Shigella flexneri 5b and comparison with Shigella flexneri 2a.</title>
        <authorList>
            <person name="Nie H."/>
            <person name="Yang F."/>
            <person name="Zhang X."/>
            <person name="Yang J."/>
            <person name="Chen L."/>
            <person name="Wang J."/>
            <person name="Xiong Z."/>
            <person name="Peng J."/>
            <person name="Sun L."/>
            <person name="Dong J."/>
            <person name="Xue Y."/>
            <person name="Xu X."/>
            <person name="Chen S."/>
            <person name="Yao Z."/>
            <person name="Shen Y."/>
            <person name="Jin Q."/>
        </authorList>
    </citation>
    <scope>NUCLEOTIDE SEQUENCE [LARGE SCALE GENOMIC DNA]</scope>
    <source>
        <strain>8401</strain>
    </source>
</reference>